<name>RPOA_RHIRD</name>
<reference key="1">
    <citation type="journal article" date="1999" name="J. Bacteriol.">
        <title>Transcriptional activation of Agrobacterium tumefaciens virulence gene promoters in Escherichia coli requires the A. tumefaciens rpoA gene, encoding the alpha subunit of RNA polymerase.</title>
        <authorList>
            <person name="Lohrke S.M."/>
            <person name="Nechaev S."/>
            <person name="Yang H."/>
            <person name="Severinov K."/>
            <person name="Jin S.J."/>
        </authorList>
    </citation>
    <scope>NUCLEOTIDE SEQUENCE [GENOMIC DNA]</scope>
    <source>
        <strain>A136</strain>
    </source>
</reference>
<keyword id="KW-0240">DNA-directed RNA polymerase</keyword>
<keyword id="KW-0548">Nucleotidyltransferase</keyword>
<keyword id="KW-0804">Transcription</keyword>
<keyword id="KW-0808">Transferase</keyword>
<feature type="chain" id="PRO_0000175254" description="DNA-directed RNA polymerase subunit alpha">
    <location>
        <begin position="1"/>
        <end position="336"/>
    </location>
</feature>
<feature type="region of interest" description="Alpha N-terminal domain (alpha-NTD)" evidence="1">
    <location>
        <begin position="1"/>
        <end position="232"/>
    </location>
</feature>
<feature type="region of interest" description="Alpha C-terminal domain (alpha-CTD)" evidence="1">
    <location>
        <begin position="248"/>
        <end position="336"/>
    </location>
</feature>
<accession>P0A4E4</accession>
<accession>Q9R710</accession>
<evidence type="ECO:0000255" key="1">
    <source>
        <dbReference type="HAMAP-Rule" id="MF_00059"/>
    </source>
</evidence>
<protein>
    <recommendedName>
        <fullName evidence="1">DNA-directed RNA polymerase subunit alpha</fullName>
        <shortName evidence="1">RNAP subunit alpha</shortName>
        <ecNumber evidence="1">2.7.7.6</ecNumber>
    </recommendedName>
    <alternativeName>
        <fullName evidence="1">RNA polymerase subunit alpha</fullName>
    </alternativeName>
    <alternativeName>
        <fullName evidence="1">Transcriptase subunit alpha</fullName>
    </alternativeName>
</protein>
<proteinExistence type="inferred from homology"/>
<comment type="function">
    <text evidence="1">DNA-dependent RNA polymerase catalyzes the transcription of DNA into RNA using the four ribonucleoside triphosphates as substrates.</text>
</comment>
<comment type="catalytic activity">
    <reaction evidence="1">
        <text>RNA(n) + a ribonucleoside 5'-triphosphate = RNA(n+1) + diphosphate</text>
        <dbReference type="Rhea" id="RHEA:21248"/>
        <dbReference type="Rhea" id="RHEA-COMP:14527"/>
        <dbReference type="Rhea" id="RHEA-COMP:17342"/>
        <dbReference type="ChEBI" id="CHEBI:33019"/>
        <dbReference type="ChEBI" id="CHEBI:61557"/>
        <dbReference type="ChEBI" id="CHEBI:140395"/>
        <dbReference type="EC" id="2.7.7.6"/>
    </reaction>
</comment>
<comment type="subunit">
    <text evidence="1">Homodimer. The RNAP catalytic core consists of 2 alpha, 1 beta, 1 beta' and 1 omega subunit. When a sigma factor is associated with the core the holoenzyme is formed, which can initiate transcription.</text>
</comment>
<comment type="domain">
    <text evidence="1">The N-terminal domain is essential for RNAP assembly and basal transcription, whereas the C-terminal domain is involved in interaction with transcriptional regulators and with upstream promoter elements.</text>
</comment>
<comment type="similarity">
    <text evidence="1">Belongs to the RNA polymerase alpha chain family.</text>
</comment>
<dbReference type="EC" id="2.7.7.6" evidence="1"/>
<dbReference type="EMBL" id="AF111855">
    <property type="protein sequence ID" value="AAD47422.1"/>
    <property type="molecule type" value="Genomic_DNA"/>
</dbReference>
<dbReference type="RefSeq" id="WP_003516121.1">
    <property type="nucleotide sequence ID" value="NZ_WJOK01000024.1"/>
</dbReference>
<dbReference type="SMR" id="P0A4E4"/>
<dbReference type="eggNOG" id="COG0202">
    <property type="taxonomic scope" value="Bacteria"/>
</dbReference>
<dbReference type="OrthoDB" id="9805706at2"/>
<dbReference type="GO" id="GO:0005737">
    <property type="term" value="C:cytoplasm"/>
    <property type="evidence" value="ECO:0007669"/>
    <property type="project" value="UniProtKB-ARBA"/>
</dbReference>
<dbReference type="GO" id="GO:0000428">
    <property type="term" value="C:DNA-directed RNA polymerase complex"/>
    <property type="evidence" value="ECO:0007669"/>
    <property type="project" value="UniProtKB-KW"/>
</dbReference>
<dbReference type="GO" id="GO:0003677">
    <property type="term" value="F:DNA binding"/>
    <property type="evidence" value="ECO:0007669"/>
    <property type="project" value="UniProtKB-UniRule"/>
</dbReference>
<dbReference type="GO" id="GO:0003899">
    <property type="term" value="F:DNA-directed RNA polymerase activity"/>
    <property type="evidence" value="ECO:0007669"/>
    <property type="project" value="UniProtKB-UniRule"/>
</dbReference>
<dbReference type="GO" id="GO:0046983">
    <property type="term" value="F:protein dimerization activity"/>
    <property type="evidence" value="ECO:0007669"/>
    <property type="project" value="InterPro"/>
</dbReference>
<dbReference type="GO" id="GO:0006351">
    <property type="term" value="P:DNA-templated transcription"/>
    <property type="evidence" value="ECO:0007669"/>
    <property type="project" value="UniProtKB-UniRule"/>
</dbReference>
<dbReference type="CDD" id="cd06928">
    <property type="entry name" value="RNAP_alpha_NTD"/>
    <property type="match status" value="1"/>
</dbReference>
<dbReference type="FunFam" id="1.10.150.20:FF:000001">
    <property type="entry name" value="DNA-directed RNA polymerase subunit alpha"/>
    <property type="match status" value="1"/>
</dbReference>
<dbReference type="FunFam" id="2.170.120.12:FF:000001">
    <property type="entry name" value="DNA-directed RNA polymerase subunit alpha"/>
    <property type="match status" value="1"/>
</dbReference>
<dbReference type="Gene3D" id="1.10.150.20">
    <property type="entry name" value="5' to 3' exonuclease, C-terminal subdomain"/>
    <property type="match status" value="1"/>
</dbReference>
<dbReference type="Gene3D" id="2.170.120.12">
    <property type="entry name" value="DNA-directed RNA polymerase, insert domain"/>
    <property type="match status" value="1"/>
</dbReference>
<dbReference type="Gene3D" id="3.30.1360.10">
    <property type="entry name" value="RNA polymerase, RBP11-like subunit"/>
    <property type="match status" value="1"/>
</dbReference>
<dbReference type="HAMAP" id="MF_00059">
    <property type="entry name" value="RNApol_bact_RpoA"/>
    <property type="match status" value="1"/>
</dbReference>
<dbReference type="InterPro" id="IPR011262">
    <property type="entry name" value="DNA-dir_RNA_pol_insert"/>
</dbReference>
<dbReference type="InterPro" id="IPR011263">
    <property type="entry name" value="DNA-dir_RNA_pol_RpoA/D/Rpb3"/>
</dbReference>
<dbReference type="InterPro" id="IPR011773">
    <property type="entry name" value="DNA-dir_RpoA"/>
</dbReference>
<dbReference type="InterPro" id="IPR036603">
    <property type="entry name" value="RBP11-like"/>
</dbReference>
<dbReference type="InterPro" id="IPR011260">
    <property type="entry name" value="RNAP_asu_C"/>
</dbReference>
<dbReference type="InterPro" id="IPR036643">
    <property type="entry name" value="RNApol_insert_sf"/>
</dbReference>
<dbReference type="NCBIfam" id="NF003513">
    <property type="entry name" value="PRK05182.1-2"/>
    <property type="match status" value="1"/>
</dbReference>
<dbReference type="NCBIfam" id="NF003519">
    <property type="entry name" value="PRK05182.2-5"/>
    <property type="match status" value="1"/>
</dbReference>
<dbReference type="NCBIfam" id="TIGR02027">
    <property type="entry name" value="rpoA"/>
    <property type="match status" value="1"/>
</dbReference>
<dbReference type="Pfam" id="PF01000">
    <property type="entry name" value="RNA_pol_A_bac"/>
    <property type="match status" value="1"/>
</dbReference>
<dbReference type="Pfam" id="PF03118">
    <property type="entry name" value="RNA_pol_A_CTD"/>
    <property type="match status" value="1"/>
</dbReference>
<dbReference type="Pfam" id="PF01193">
    <property type="entry name" value="RNA_pol_L"/>
    <property type="match status" value="1"/>
</dbReference>
<dbReference type="SMART" id="SM00662">
    <property type="entry name" value="RPOLD"/>
    <property type="match status" value="1"/>
</dbReference>
<dbReference type="SUPFAM" id="SSF47789">
    <property type="entry name" value="C-terminal domain of RNA polymerase alpha subunit"/>
    <property type="match status" value="1"/>
</dbReference>
<dbReference type="SUPFAM" id="SSF56553">
    <property type="entry name" value="Insert subdomain of RNA polymerase alpha subunit"/>
    <property type="match status" value="1"/>
</dbReference>
<dbReference type="SUPFAM" id="SSF55257">
    <property type="entry name" value="RBP11-like subunits of RNA polymerase"/>
    <property type="match status" value="1"/>
</dbReference>
<sequence>MIQKNWQELIKPNKVEFTSSSRTKATLVAEPLERGFGLTLGNALRRVLLSSLRGAAVTAVQIDGVLHEFSSIPGVREDVTDIVLNIKEIAIKMDGDDSKRMVVRKQGPGSVTAGDIQTVGDIEILNPDHVICTLDEGAEIRMEFTVNNGKGYVPAERNRAEDAPIGLIPVDSLYSPVKKVSYKVENTREGQVLDYDKLIMTIETNGSVSGEDAVAFAARILQDQLGVFVNFDEPQKEAEEESVTELAFNPALLKKVDELELSVRSANCLKNDNIVYIGDLIQKTEAEMLRTPNFGRKSLNEIKEVLASMGLHLGMEVPAWPPENIEDLAKRYEDQY</sequence>
<organism>
    <name type="scientific">Rhizobium radiobacter</name>
    <name type="common">Agrobacterium tumefaciens</name>
    <name type="synonym">Agrobacterium radiobacter</name>
    <dbReference type="NCBI Taxonomy" id="358"/>
    <lineage>
        <taxon>Bacteria</taxon>
        <taxon>Pseudomonadati</taxon>
        <taxon>Pseudomonadota</taxon>
        <taxon>Alphaproteobacteria</taxon>
        <taxon>Hyphomicrobiales</taxon>
        <taxon>Rhizobiaceae</taxon>
        <taxon>Rhizobium/Agrobacterium group</taxon>
        <taxon>Agrobacterium</taxon>
        <taxon>Agrobacterium tumefaciens complex</taxon>
    </lineage>
</organism>
<gene>
    <name evidence="1" type="primary">rpoA</name>
</gene>